<comment type="function">
    <text evidence="1">3'-to-5' exoribonuclease specific for small oligoribonucleotides.</text>
</comment>
<comment type="subcellular location">
    <subcellularLocation>
        <location evidence="1">Cytoplasm</location>
    </subcellularLocation>
</comment>
<comment type="similarity">
    <text evidence="1">Belongs to the oligoribonuclease family.</text>
</comment>
<protein>
    <recommendedName>
        <fullName evidence="1">Oligoribonuclease</fullName>
        <ecNumber evidence="1">3.1.15.-</ecNumber>
    </recommendedName>
</protein>
<dbReference type="EC" id="3.1.15.-" evidence="1"/>
<dbReference type="EMBL" id="CT573326">
    <property type="protein sequence ID" value="CAK17596.1"/>
    <property type="molecule type" value="Genomic_DNA"/>
</dbReference>
<dbReference type="RefSeq" id="WP_011535956.1">
    <property type="nucleotide sequence ID" value="NC_008027.1"/>
</dbReference>
<dbReference type="SMR" id="Q1I440"/>
<dbReference type="STRING" id="384676.PSEEN4954"/>
<dbReference type="GeneID" id="32807900"/>
<dbReference type="KEGG" id="pen:PSEEN4954"/>
<dbReference type="eggNOG" id="COG1949">
    <property type="taxonomic scope" value="Bacteria"/>
</dbReference>
<dbReference type="HOGENOM" id="CLU_064761_2_0_6"/>
<dbReference type="OrthoDB" id="9801329at2"/>
<dbReference type="Proteomes" id="UP000000658">
    <property type="component" value="Chromosome"/>
</dbReference>
<dbReference type="GO" id="GO:0005737">
    <property type="term" value="C:cytoplasm"/>
    <property type="evidence" value="ECO:0007669"/>
    <property type="project" value="UniProtKB-SubCell"/>
</dbReference>
<dbReference type="GO" id="GO:0000175">
    <property type="term" value="F:3'-5'-RNA exonuclease activity"/>
    <property type="evidence" value="ECO:0007669"/>
    <property type="project" value="InterPro"/>
</dbReference>
<dbReference type="GO" id="GO:0003676">
    <property type="term" value="F:nucleic acid binding"/>
    <property type="evidence" value="ECO:0007669"/>
    <property type="project" value="InterPro"/>
</dbReference>
<dbReference type="GO" id="GO:0006259">
    <property type="term" value="P:DNA metabolic process"/>
    <property type="evidence" value="ECO:0007669"/>
    <property type="project" value="UniProtKB-ARBA"/>
</dbReference>
<dbReference type="CDD" id="cd06135">
    <property type="entry name" value="Orn"/>
    <property type="match status" value="1"/>
</dbReference>
<dbReference type="FunFam" id="3.30.420.10:FF:000003">
    <property type="entry name" value="Oligoribonuclease"/>
    <property type="match status" value="1"/>
</dbReference>
<dbReference type="Gene3D" id="3.30.420.10">
    <property type="entry name" value="Ribonuclease H-like superfamily/Ribonuclease H"/>
    <property type="match status" value="1"/>
</dbReference>
<dbReference type="HAMAP" id="MF_00045">
    <property type="entry name" value="Oligoribonuclease"/>
    <property type="match status" value="1"/>
</dbReference>
<dbReference type="InterPro" id="IPR013520">
    <property type="entry name" value="Exonuclease_RNaseT/DNA_pol3"/>
</dbReference>
<dbReference type="InterPro" id="IPR022894">
    <property type="entry name" value="Oligoribonuclease"/>
</dbReference>
<dbReference type="InterPro" id="IPR012337">
    <property type="entry name" value="RNaseH-like_sf"/>
</dbReference>
<dbReference type="InterPro" id="IPR036397">
    <property type="entry name" value="RNaseH_sf"/>
</dbReference>
<dbReference type="NCBIfam" id="NF003765">
    <property type="entry name" value="PRK05359.1"/>
    <property type="match status" value="1"/>
</dbReference>
<dbReference type="PANTHER" id="PTHR11046">
    <property type="entry name" value="OLIGORIBONUCLEASE, MITOCHONDRIAL"/>
    <property type="match status" value="1"/>
</dbReference>
<dbReference type="PANTHER" id="PTHR11046:SF0">
    <property type="entry name" value="OLIGORIBONUCLEASE, MITOCHONDRIAL"/>
    <property type="match status" value="1"/>
</dbReference>
<dbReference type="Pfam" id="PF00929">
    <property type="entry name" value="RNase_T"/>
    <property type="match status" value="1"/>
</dbReference>
<dbReference type="SMART" id="SM00479">
    <property type="entry name" value="EXOIII"/>
    <property type="match status" value="1"/>
</dbReference>
<dbReference type="SUPFAM" id="SSF53098">
    <property type="entry name" value="Ribonuclease H-like"/>
    <property type="match status" value="1"/>
</dbReference>
<reference key="1">
    <citation type="journal article" date="2006" name="Nat. Biotechnol.">
        <title>Complete genome sequence of the entomopathogenic and metabolically versatile soil bacterium Pseudomonas entomophila.</title>
        <authorList>
            <person name="Vodovar N."/>
            <person name="Vallenet D."/>
            <person name="Cruveiller S."/>
            <person name="Rouy Z."/>
            <person name="Barbe V."/>
            <person name="Acosta C."/>
            <person name="Cattolico L."/>
            <person name="Jubin C."/>
            <person name="Lajus A."/>
            <person name="Segurens B."/>
            <person name="Vacherie B."/>
            <person name="Wincker P."/>
            <person name="Weissenbach J."/>
            <person name="Lemaitre B."/>
            <person name="Medigue C."/>
            <person name="Boccard F."/>
        </authorList>
    </citation>
    <scope>NUCLEOTIDE SEQUENCE [LARGE SCALE GENOMIC DNA]</scope>
    <source>
        <strain>L48</strain>
    </source>
</reference>
<evidence type="ECO:0000255" key="1">
    <source>
        <dbReference type="HAMAP-Rule" id="MF_00045"/>
    </source>
</evidence>
<proteinExistence type="inferred from homology"/>
<organism>
    <name type="scientific">Pseudomonas entomophila (strain L48)</name>
    <dbReference type="NCBI Taxonomy" id="384676"/>
    <lineage>
        <taxon>Bacteria</taxon>
        <taxon>Pseudomonadati</taxon>
        <taxon>Pseudomonadota</taxon>
        <taxon>Gammaproteobacteria</taxon>
        <taxon>Pseudomonadales</taxon>
        <taxon>Pseudomonadaceae</taxon>
        <taxon>Pseudomonas</taxon>
    </lineage>
</organism>
<name>ORN_PSEE4</name>
<feature type="chain" id="PRO_1000004273" description="Oligoribonuclease">
    <location>
        <begin position="1"/>
        <end position="180"/>
    </location>
</feature>
<feature type="domain" description="Exonuclease" evidence="1">
    <location>
        <begin position="7"/>
        <end position="170"/>
    </location>
</feature>
<feature type="active site" evidence="1">
    <location>
        <position position="128"/>
    </location>
</feature>
<gene>
    <name evidence="1" type="primary">orn</name>
    <name type="ordered locus">PSEEN4954</name>
</gene>
<accession>Q1I440</accession>
<keyword id="KW-0963">Cytoplasm</keyword>
<keyword id="KW-0269">Exonuclease</keyword>
<keyword id="KW-0378">Hydrolase</keyword>
<keyword id="KW-0540">Nuclease</keyword>
<sequence>MQNPQNLIWIDLEMTGLDPDSDVIIEMATIVTDSELNTLAEGPVIAIHHSDEVLARMDEWNTRTHGNSGLTQRVRESKVSMAEAEAQTIAFLEQWVPKGKSPICGNSICQDRRFLYRHMRGLENYFHYRNLDVSTLKELAARWAPDVRDSFKKGSTHLALDDIRESIAELRHYREHFIKF</sequence>